<sequence>MLTLAHYLVLGAILFAIAIVGIFLNRRNIIIILMAIELMLLAVNTNFVAFSHYLGDVHGQIFVFFVLTVAAAEAAIGLAILVTLFRKLDTINVEDLDQLKG</sequence>
<evidence type="ECO:0000255" key="1">
    <source>
        <dbReference type="HAMAP-Rule" id="MF_01456"/>
    </source>
</evidence>
<gene>
    <name evidence="1" type="primary">nuoK</name>
    <name type="ordered locus">BMA10247_0423</name>
</gene>
<accession>A3MIB1</accession>
<protein>
    <recommendedName>
        <fullName evidence="1">NADH-quinone oxidoreductase subunit K</fullName>
        <ecNumber evidence="1">7.1.1.-</ecNumber>
    </recommendedName>
    <alternativeName>
        <fullName evidence="1">NADH dehydrogenase I subunit K</fullName>
    </alternativeName>
    <alternativeName>
        <fullName evidence="1">NDH-1 subunit K</fullName>
    </alternativeName>
</protein>
<name>NUOK_BURM7</name>
<organism>
    <name type="scientific">Burkholderia mallei (strain NCTC 10247)</name>
    <dbReference type="NCBI Taxonomy" id="320389"/>
    <lineage>
        <taxon>Bacteria</taxon>
        <taxon>Pseudomonadati</taxon>
        <taxon>Pseudomonadota</taxon>
        <taxon>Betaproteobacteria</taxon>
        <taxon>Burkholderiales</taxon>
        <taxon>Burkholderiaceae</taxon>
        <taxon>Burkholderia</taxon>
        <taxon>pseudomallei group</taxon>
    </lineage>
</organism>
<proteinExistence type="inferred from homology"/>
<feature type="chain" id="PRO_0000389990" description="NADH-quinone oxidoreductase subunit K">
    <location>
        <begin position="1"/>
        <end position="101"/>
    </location>
</feature>
<feature type="transmembrane region" description="Helical" evidence="1">
    <location>
        <begin position="4"/>
        <end position="24"/>
    </location>
</feature>
<feature type="transmembrane region" description="Helical" evidence="1">
    <location>
        <begin position="29"/>
        <end position="49"/>
    </location>
</feature>
<feature type="transmembrane region" description="Helical" evidence="1">
    <location>
        <begin position="61"/>
        <end position="81"/>
    </location>
</feature>
<dbReference type="EC" id="7.1.1.-" evidence="1"/>
<dbReference type="EMBL" id="CP000548">
    <property type="protein sequence ID" value="ABO06691.1"/>
    <property type="molecule type" value="Genomic_DNA"/>
</dbReference>
<dbReference type="RefSeq" id="WP_004185739.1">
    <property type="nucleotide sequence ID" value="NZ_CP007802.1"/>
</dbReference>
<dbReference type="SMR" id="A3MIB1"/>
<dbReference type="GeneID" id="98107315"/>
<dbReference type="KEGG" id="bmaz:BM44_2588"/>
<dbReference type="KEGG" id="bmn:BMA10247_0423"/>
<dbReference type="PATRIC" id="fig|320389.8.peg.2922"/>
<dbReference type="GO" id="GO:0030964">
    <property type="term" value="C:NADH dehydrogenase complex"/>
    <property type="evidence" value="ECO:0007669"/>
    <property type="project" value="TreeGrafter"/>
</dbReference>
<dbReference type="GO" id="GO:0005886">
    <property type="term" value="C:plasma membrane"/>
    <property type="evidence" value="ECO:0007669"/>
    <property type="project" value="UniProtKB-SubCell"/>
</dbReference>
<dbReference type="GO" id="GO:0050136">
    <property type="term" value="F:NADH:ubiquinone reductase (non-electrogenic) activity"/>
    <property type="evidence" value="ECO:0007669"/>
    <property type="project" value="UniProtKB-UniRule"/>
</dbReference>
<dbReference type="GO" id="GO:0048038">
    <property type="term" value="F:quinone binding"/>
    <property type="evidence" value="ECO:0007669"/>
    <property type="project" value="UniProtKB-KW"/>
</dbReference>
<dbReference type="GO" id="GO:0042773">
    <property type="term" value="P:ATP synthesis coupled electron transport"/>
    <property type="evidence" value="ECO:0007669"/>
    <property type="project" value="InterPro"/>
</dbReference>
<dbReference type="FunFam" id="1.10.287.3510:FF:000001">
    <property type="entry name" value="NADH-quinone oxidoreductase subunit K"/>
    <property type="match status" value="1"/>
</dbReference>
<dbReference type="Gene3D" id="1.10.287.3510">
    <property type="match status" value="1"/>
</dbReference>
<dbReference type="HAMAP" id="MF_01456">
    <property type="entry name" value="NDH1_NuoK"/>
    <property type="match status" value="1"/>
</dbReference>
<dbReference type="InterPro" id="IPR001133">
    <property type="entry name" value="NADH_UbQ_OxRdtase_chain4L/K"/>
</dbReference>
<dbReference type="InterPro" id="IPR039428">
    <property type="entry name" value="NUOK/Mnh_C1-like"/>
</dbReference>
<dbReference type="NCBIfam" id="NF004320">
    <property type="entry name" value="PRK05715.1-2"/>
    <property type="match status" value="1"/>
</dbReference>
<dbReference type="NCBIfam" id="NF004321">
    <property type="entry name" value="PRK05715.1-3"/>
    <property type="match status" value="1"/>
</dbReference>
<dbReference type="NCBIfam" id="NF004323">
    <property type="entry name" value="PRK05715.1-5"/>
    <property type="match status" value="1"/>
</dbReference>
<dbReference type="PANTHER" id="PTHR11434:SF21">
    <property type="entry name" value="NADH DEHYDROGENASE SUBUNIT 4L-RELATED"/>
    <property type="match status" value="1"/>
</dbReference>
<dbReference type="PANTHER" id="PTHR11434">
    <property type="entry name" value="NADH-UBIQUINONE OXIDOREDUCTASE SUBUNIT ND4L"/>
    <property type="match status" value="1"/>
</dbReference>
<dbReference type="Pfam" id="PF00420">
    <property type="entry name" value="Oxidored_q2"/>
    <property type="match status" value="1"/>
</dbReference>
<reference key="1">
    <citation type="journal article" date="2010" name="Genome Biol. Evol.">
        <title>Continuing evolution of Burkholderia mallei through genome reduction and large-scale rearrangements.</title>
        <authorList>
            <person name="Losada L."/>
            <person name="Ronning C.M."/>
            <person name="DeShazer D."/>
            <person name="Woods D."/>
            <person name="Fedorova N."/>
            <person name="Kim H.S."/>
            <person name="Shabalina S.A."/>
            <person name="Pearson T.R."/>
            <person name="Brinkac L."/>
            <person name="Tan P."/>
            <person name="Nandi T."/>
            <person name="Crabtree J."/>
            <person name="Badger J."/>
            <person name="Beckstrom-Sternberg S."/>
            <person name="Saqib M."/>
            <person name="Schutzer S.E."/>
            <person name="Keim P."/>
            <person name="Nierman W.C."/>
        </authorList>
    </citation>
    <scope>NUCLEOTIDE SEQUENCE [LARGE SCALE GENOMIC DNA]</scope>
    <source>
        <strain>NCTC 10247</strain>
    </source>
</reference>
<comment type="function">
    <text evidence="1">NDH-1 shuttles electrons from NADH, via FMN and iron-sulfur (Fe-S) centers, to quinones in the respiratory chain. The immediate electron acceptor for the enzyme in this species is believed to be ubiquinone. Couples the redox reaction to proton translocation (for every two electrons transferred, four hydrogen ions are translocated across the cytoplasmic membrane), and thus conserves the redox energy in a proton gradient.</text>
</comment>
<comment type="catalytic activity">
    <reaction evidence="1">
        <text>a quinone + NADH + 5 H(+)(in) = a quinol + NAD(+) + 4 H(+)(out)</text>
        <dbReference type="Rhea" id="RHEA:57888"/>
        <dbReference type="ChEBI" id="CHEBI:15378"/>
        <dbReference type="ChEBI" id="CHEBI:24646"/>
        <dbReference type="ChEBI" id="CHEBI:57540"/>
        <dbReference type="ChEBI" id="CHEBI:57945"/>
        <dbReference type="ChEBI" id="CHEBI:132124"/>
    </reaction>
</comment>
<comment type="subunit">
    <text evidence="1">NDH-1 is composed of 14 different subunits. Subunits NuoA, H, J, K, L, M, N constitute the membrane sector of the complex.</text>
</comment>
<comment type="subcellular location">
    <subcellularLocation>
        <location evidence="1">Cell inner membrane</location>
        <topology evidence="1">Multi-pass membrane protein</topology>
    </subcellularLocation>
</comment>
<comment type="similarity">
    <text evidence="1">Belongs to the complex I subunit 4L family.</text>
</comment>
<keyword id="KW-0997">Cell inner membrane</keyword>
<keyword id="KW-1003">Cell membrane</keyword>
<keyword id="KW-0472">Membrane</keyword>
<keyword id="KW-0520">NAD</keyword>
<keyword id="KW-0874">Quinone</keyword>
<keyword id="KW-1278">Translocase</keyword>
<keyword id="KW-0812">Transmembrane</keyword>
<keyword id="KW-1133">Transmembrane helix</keyword>
<keyword id="KW-0813">Transport</keyword>
<keyword id="KW-0830">Ubiquinone</keyword>